<organism>
    <name type="scientific">Sus scrofa</name>
    <name type="common">Pig</name>
    <dbReference type="NCBI Taxonomy" id="9823"/>
    <lineage>
        <taxon>Eukaryota</taxon>
        <taxon>Metazoa</taxon>
        <taxon>Chordata</taxon>
        <taxon>Craniata</taxon>
        <taxon>Vertebrata</taxon>
        <taxon>Euteleostomi</taxon>
        <taxon>Mammalia</taxon>
        <taxon>Eutheria</taxon>
        <taxon>Laurasiatheria</taxon>
        <taxon>Artiodactyla</taxon>
        <taxon>Suina</taxon>
        <taxon>Suidae</taxon>
        <taxon>Sus</taxon>
    </lineage>
</organism>
<name>RS19_PIG</name>
<accession>Q29308</accession>
<feature type="chain" id="PRO_0000153812" description="Small ribosomal subunit protein eS19">
    <location>
        <begin position="1"/>
        <end position="136" status="greater than"/>
    </location>
</feature>
<feature type="region of interest" description="Disordered" evidence="3">
    <location>
        <begin position="116"/>
        <end position="136"/>
    </location>
</feature>
<feature type="modified residue" description="N6-acetyllysine" evidence="1">
    <location>
        <position position="23"/>
    </location>
</feature>
<feature type="modified residue" description="Omega-N-methylarginine" evidence="1">
    <location>
        <position position="67"/>
    </location>
</feature>
<feature type="modified residue" description="N6-acetyllysine" evidence="1">
    <location>
        <position position="111"/>
    </location>
</feature>
<feature type="modified residue" description="N6-acetyllysine" evidence="2">
    <location>
        <position position="115"/>
    </location>
</feature>
<feature type="non-terminal residue">
    <location>
        <position position="136"/>
    </location>
</feature>
<comment type="function">
    <text evidence="1">Component of the small ribosomal subunit. The ribosome is a large ribonucleoprotein complex responsible for the synthesis of proteins in the cell. Required for pre-rRNA processing and maturation of 40S ribosomal subunits. Part of the small subunit (SSU) processome, first precursor of the small eukaryotic ribosomal subunit. During the assembly of the SSU processome in the nucleolus, many ribosome biogenesis factors, an RNA chaperone and ribosomal proteins associate with the nascent pre-rRNA and work in concert to generate RNA folding, modifications, rearrangements and cleavage as well as targeted degradation of pre-ribosomal RNA by the RNA exosome (By similarity).</text>
</comment>
<comment type="subunit">
    <text evidence="1 2">Component of the small ribosomal subunit. Part of the small subunit (SSU) processome, composed of more than 70 proteins and the RNA chaperone small nucleolar RNA (snoRNA) U3. Interacts with RPS19BP1; the interaction is direct and mediates the integration of RPS19 in state post-A1 (By similarity). Interacts with RPS19BP1 (By similarity).</text>
</comment>
<comment type="subcellular location">
    <subcellularLocation>
        <location evidence="1">Cytoplasm</location>
    </subcellularLocation>
    <subcellularLocation>
        <location evidence="1">Nucleus</location>
        <location evidence="1">Nucleolus</location>
    </subcellularLocation>
</comment>
<comment type="similarity">
    <text evidence="4">Belongs to the eukaryotic ribosomal protein eS19 family.</text>
</comment>
<evidence type="ECO:0000250" key="1">
    <source>
        <dbReference type="UniProtKB" id="P39019"/>
    </source>
</evidence>
<evidence type="ECO:0000250" key="2">
    <source>
        <dbReference type="UniProtKB" id="Q9CZX8"/>
    </source>
</evidence>
<evidence type="ECO:0000256" key="3">
    <source>
        <dbReference type="SAM" id="MobiDB-lite"/>
    </source>
</evidence>
<evidence type="ECO:0000305" key="4"/>
<protein>
    <recommendedName>
        <fullName evidence="4">Small ribosomal subunit protein eS19</fullName>
    </recommendedName>
    <alternativeName>
        <fullName>40S ribosomal protein S19</fullName>
    </alternativeName>
</protein>
<gene>
    <name type="primary">RPS19</name>
</gene>
<reference key="1">
    <citation type="journal article" date="1996" name="Mamm. Genome">
        <title>Evaluation and characterization of a porcine small intestine cDNA library: analysis of 839 clones.</title>
        <authorList>
            <person name="Winteroe A.K."/>
            <person name="Fredholm M."/>
            <person name="Davies W."/>
        </authorList>
    </citation>
    <scope>NUCLEOTIDE SEQUENCE [LARGE SCALE MRNA]</scope>
    <source>
        <tissue>Small intestine</tissue>
    </source>
</reference>
<sequence length="136" mass="15096">MPGVTVKDVNQQEFVRALAAFLKKSGKLKVPEWVDTVKLAXHKELAPYDENWFYTRAASTARHLYLRGGAGVGSMTKIYGGRQRNGVMPSHFSRGSKSVARRVLQALEGLKMVEKDQDGGRKLTPQGQRDLDRIAG</sequence>
<keyword id="KW-0007">Acetylation</keyword>
<keyword id="KW-0963">Cytoplasm</keyword>
<keyword id="KW-0488">Methylation</keyword>
<keyword id="KW-0539">Nucleus</keyword>
<keyword id="KW-1185">Reference proteome</keyword>
<keyword id="KW-0687">Ribonucleoprotein</keyword>
<keyword id="KW-0689">Ribosomal protein</keyword>
<proteinExistence type="evidence at transcript level"/>
<dbReference type="EMBL" id="F14684">
    <property type="protein sequence ID" value="CAA23196.1"/>
    <property type="molecule type" value="mRNA"/>
</dbReference>
<dbReference type="FunCoup" id="Q29308">
    <property type="interactions" value="362"/>
</dbReference>
<dbReference type="STRING" id="9823.ENSSSCP00000036235"/>
<dbReference type="PaxDb" id="9823-ENSSSCP00000003296"/>
<dbReference type="PeptideAtlas" id="Q29308"/>
<dbReference type="eggNOG" id="KOG3411">
    <property type="taxonomic scope" value="Eukaryota"/>
</dbReference>
<dbReference type="InParanoid" id="Q29308"/>
<dbReference type="Proteomes" id="UP000008227">
    <property type="component" value="Unplaced"/>
</dbReference>
<dbReference type="Proteomes" id="UP000314985">
    <property type="component" value="Unplaced"/>
</dbReference>
<dbReference type="Proteomes" id="UP000694570">
    <property type="component" value="Unplaced"/>
</dbReference>
<dbReference type="Proteomes" id="UP000694571">
    <property type="component" value="Unplaced"/>
</dbReference>
<dbReference type="Proteomes" id="UP000694720">
    <property type="component" value="Unplaced"/>
</dbReference>
<dbReference type="Proteomes" id="UP000694722">
    <property type="component" value="Unplaced"/>
</dbReference>
<dbReference type="Proteomes" id="UP000694723">
    <property type="component" value="Unplaced"/>
</dbReference>
<dbReference type="Proteomes" id="UP000694724">
    <property type="component" value="Unplaced"/>
</dbReference>
<dbReference type="Proteomes" id="UP000694725">
    <property type="component" value="Unplaced"/>
</dbReference>
<dbReference type="Proteomes" id="UP000694726">
    <property type="component" value="Unplaced"/>
</dbReference>
<dbReference type="Proteomes" id="UP000694727">
    <property type="component" value="Unplaced"/>
</dbReference>
<dbReference type="Proteomes" id="UP000694728">
    <property type="component" value="Unplaced"/>
</dbReference>
<dbReference type="GO" id="GO:0022627">
    <property type="term" value="C:cytosolic small ribosomal subunit"/>
    <property type="evidence" value="ECO:0000318"/>
    <property type="project" value="GO_Central"/>
</dbReference>
<dbReference type="GO" id="GO:0005730">
    <property type="term" value="C:nucleolus"/>
    <property type="evidence" value="ECO:0007669"/>
    <property type="project" value="UniProtKB-SubCell"/>
</dbReference>
<dbReference type="GO" id="GO:0032040">
    <property type="term" value="C:small-subunit processome"/>
    <property type="evidence" value="ECO:0000250"/>
    <property type="project" value="UniProtKB"/>
</dbReference>
<dbReference type="GO" id="GO:0003723">
    <property type="term" value="F:RNA binding"/>
    <property type="evidence" value="ECO:0000318"/>
    <property type="project" value="GO_Central"/>
</dbReference>
<dbReference type="GO" id="GO:0003735">
    <property type="term" value="F:structural constituent of ribosome"/>
    <property type="evidence" value="ECO:0000318"/>
    <property type="project" value="GO_Central"/>
</dbReference>
<dbReference type="GO" id="GO:0000028">
    <property type="term" value="P:ribosomal small subunit assembly"/>
    <property type="evidence" value="ECO:0000318"/>
    <property type="project" value="GO_Central"/>
</dbReference>
<dbReference type="GO" id="GO:0042274">
    <property type="term" value="P:ribosomal small subunit biogenesis"/>
    <property type="evidence" value="ECO:0000250"/>
    <property type="project" value="UniProtKB"/>
</dbReference>
<dbReference type="GO" id="GO:0006412">
    <property type="term" value="P:translation"/>
    <property type="evidence" value="ECO:0007669"/>
    <property type="project" value="InterPro"/>
</dbReference>
<dbReference type="FunFam" id="1.10.10.10:FF:000255">
    <property type="entry name" value="40S ribosomal protein S19"/>
    <property type="match status" value="1"/>
</dbReference>
<dbReference type="Gene3D" id="1.10.10.10">
    <property type="entry name" value="Winged helix-like DNA-binding domain superfamily/Winged helix DNA-binding domain"/>
    <property type="match status" value="1"/>
</dbReference>
<dbReference type="InterPro" id="IPR001266">
    <property type="entry name" value="Ribosomal_eS19"/>
</dbReference>
<dbReference type="InterPro" id="IPR018277">
    <property type="entry name" value="Ribosomal_eS19_CS"/>
</dbReference>
<dbReference type="InterPro" id="IPR036388">
    <property type="entry name" value="WH-like_DNA-bd_sf"/>
</dbReference>
<dbReference type="InterPro" id="IPR036390">
    <property type="entry name" value="WH_DNA-bd_sf"/>
</dbReference>
<dbReference type="PANTHER" id="PTHR11710">
    <property type="entry name" value="40S RIBOSOMAL PROTEIN S19"/>
    <property type="match status" value="1"/>
</dbReference>
<dbReference type="PANTHER" id="PTHR11710:SF0">
    <property type="entry name" value="40S RIBOSOMAL PROTEIN S19"/>
    <property type="match status" value="1"/>
</dbReference>
<dbReference type="Pfam" id="PF01090">
    <property type="entry name" value="Ribosomal_S19e"/>
    <property type="match status" value="1"/>
</dbReference>
<dbReference type="SMART" id="SM01413">
    <property type="entry name" value="Ribosomal_S19e"/>
    <property type="match status" value="1"/>
</dbReference>
<dbReference type="SUPFAM" id="SSF46785">
    <property type="entry name" value="Winged helix' DNA-binding domain"/>
    <property type="match status" value="1"/>
</dbReference>
<dbReference type="PROSITE" id="PS00628">
    <property type="entry name" value="RIBOSOMAL_S19E"/>
    <property type="match status" value="1"/>
</dbReference>